<organism>
    <name type="scientific">Saccharomyces cerevisiae (strain ATCC 204508 / S288c)</name>
    <name type="common">Baker's yeast</name>
    <dbReference type="NCBI Taxonomy" id="559292"/>
    <lineage>
        <taxon>Eukaryota</taxon>
        <taxon>Fungi</taxon>
        <taxon>Dikarya</taxon>
        <taxon>Ascomycota</taxon>
        <taxon>Saccharomycotina</taxon>
        <taxon>Saccharomycetes</taxon>
        <taxon>Saccharomycetales</taxon>
        <taxon>Saccharomycetaceae</taxon>
        <taxon>Saccharomyces</taxon>
    </lineage>
</organism>
<keyword id="KW-0325">Glycoprotein</keyword>
<keyword id="KW-0472">Membrane</keyword>
<keyword id="KW-1185">Reference proteome</keyword>
<keyword id="KW-0812">Transmembrane</keyword>
<keyword id="KW-1133">Transmembrane helix</keyword>
<keyword id="KW-0813">Transport</keyword>
<gene>
    <name type="primary">SUL1</name>
    <name type="synonym">SFP2</name>
    <name type="ordered locus">YBR294W</name>
    <name type="ORF">YBR2110</name>
</gene>
<accession>P38359</accession>
<accession>D6VQT8</accession>
<comment type="function">
    <text>High affinity uptake of sulfate into the cell.</text>
</comment>
<comment type="subcellular location">
    <subcellularLocation>
        <location>Membrane</location>
        <topology>Multi-pass membrane protein</topology>
    </subcellularLocation>
</comment>
<comment type="similarity">
    <text evidence="3">Belongs to the SLC26A/SulP transporter (TC 2.A.53) family.</text>
</comment>
<comment type="sequence caution" evidence="3">
    <conflict type="frameshift">
        <sequence resource="EMBL-CDS" id="CAA84506"/>
    </conflict>
</comment>
<reference key="1">
    <citation type="journal article" date="1995" name="Mol. Gen. Genet.">
        <title>Isolation of a cDNA from Saccharomyces cerevisiae that encodes a high affinity sulphate transporter at the plasma membrane.</title>
        <authorList>
            <person name="Smith F.W."/>
            <person name="Hawkesford M.J."/>
            <person name="Prosser I.M."/>
            <person name="Clarkson D.T."/>
        </authorList>
    </citation>
    <scope>NUCLEOTIDE SEQUENCE [MRNA]</scope>
    <source>
        <strain>INVSC1</strain>
    </source>
</reference>
<reference key="2">
    <citation type="journal article" date="1994" name="EMBO J.">
        <title>Complete DNA sequence of yeast chromosome II.</title>
        <authorList>
            <person name="Feldmann H."/>
            <person name="Aigle M."/>
            <person name="Aljinovic G."/>
            <person name="Andre B."/>
            <person name="Baclet M.C."/>
            <person name="Barthe C."/>
            <person name="Baur A."/>
            <person name="Becam A.-M."/>
            <person name="Biteau N."/>
            <person name="Boles E."/>
            <person name="Brandt T."/>
            <person name="Brendel M."/>
            <person name="Brueckner M."/>
            <person name="Bussereau F."/>
            <person name="Christiansen C."/>
            <person name="Contreras R."/>
            <person name="Crouzet M."/>
            <person name="Cziepluch C."/>
            <person name="Demolis N."/>
            <person name="Delaveau T."/>
            <person name="Doignon F."/>
            <person name="Domdey H."/>
            <person name="Duesterhus S."/>
            <person name="Dubois E."/>
            <person name="Dujon B."/>
            <person name="El Bakkoury M."/>
            <person name="Entian K.-D."/>
            <person name="Feuermann M."/>
            <person name="Fiers W."/>
            <person name="Fobo G.M."/>
            <person name="Fritz C."/>
            <person name="Gassenhuber J."/>
            <person name="Glansdorff N."/>
            <person name="Goffeau A."/>
            <person name="Grivell L.A."/>
            <person name="de Haan M."/>
            <person name="Hein C."/>
            <person name="Herbert C.J."/>
            <person name="Hollenberg C.P."/>
            <person name="Holmstroem K."/>
            <person name="Jacq C."/>
            <person name="Jacquet M."/>
            <person name="Jauniaux J.-C."/>
            <person name="Jonniaux J.-L."/>
            <person name="Kallesoee T."/>
            <person name="Kiesau P."/>
            <person name="Kirchrath L."/>
            <person name="Koetter P."/>
            <person name="Korol S."/>
            <person name="Liebl S."/>
            <person name="Logghe M."/>
            <person name="Lohan A.J.E."/>
            <person name="Louis E.J."/>
            <person name="Li Z.Y."/>
            <person name="Maat M.J."/>
            <person name="Mallet L."/>
            <person name="Mannhaupt G."/>
            <person name="Messenguy F."/>
            <person name="Miosga T."/>
            <person name="Molemans F."/>
            <person name="Mueller S."/>
            <person name="Nasr F."/>
            <person name="Obermaier B."/>
            <person name="Perea J."/>
            <person name="Pierard A."/>
            <person name="Piravandi E."/>
            <person name="Pohl F.M."/>
            <person name="Pohl T.M."/>
            <person name="Potier S."/>
            <person name="Proft M."/>
            <person name="Purnelle B."/>
            <person name="Ramezani Rad M."/>
            <person name="Rieger M."/>
            <person name="Rose M."/>
            <person name="Schaaff-Gerstenschlaeger I."/>
            <person name="Scherens B."/>
            <person name="Schwarzlose C."/>
            <person name="Skala J."/>
            <person name="Slonimski P.P."/>
            <person name="Smits P.H.M."/>
            <person name="Souciet J.-L."/>
            <person name="Steensma H.Y."/>
            <person name="Stucka R."/>
            <person name="Urrestarazu L.A."/>
            <person name="van der Aart Q.J.M."/>
            <person name="Van Dyck L."/>
            <person name="Vassarotti A."/>
            <person name="Vetter I."/>
            <person name="Vierendeels F."/>
            <person name="Vissers S."/>
            <person name="Wagner G."/>
            <person name="de Wergifosse P."/>
            <person name="Wolfe K.H."/>
            <person name="Zagulski M."/>
            <person name="Zimmermann F.K."/>
            <person name="Mewes H.-W."/>
            <person name="Kleine K."/>
        </authorList>
    </citation>
    <scope>NUCLEOTIDE SEQUENCE [LARGE SCALE GENOMIC DNA]</scope>
    <source>
        <strain>ATCC 204508 / S288c</strain>
    </source>
</reference>
<reference key="3">
    <citation type="journal article" date="2014" name="G3 (Bethesda)">
        <title>The reference genome sequence of Saccharomyces cerevisiae: Then and now.</title>
        <authorList>
            <person name="Engel S.R."/>
            <person name="Dietrich F.S."/>
            <person name="Fisk D.G."/>
            <person name="Binkley G."/>
            <person name="Balakrishnan R."/>
            <person name="Costanzo M.C."/>
            <person name="Dwight S.S."/>
            <person name="Hitz B.C."/>
            <person name="Karra K."/>
            <person name="Nash R.S."/>
            <person name="Weng S."/>
            <person name="Wong E.D."/>
            <person name="Lloyd P."/>
            <person name="Skrzypek M.S."/>
            <person name="Miyasato S.R."/>
            <person name="Simison M."/>
            <person name="Cherry J.M."/>
        </authorList>
    </citation>
    <scope>GENOME REANNOTATION</scope>
    <source>
        <strain>ATCC 204508 / S288c</strain>
    </source>
</reference>
<reference key="4">
    <citation type="journal article" date="2007" name="Genome Res.">
        <title>Approaching a complete repository of sequence-verified protein-encoding clones for Saccharomyces cerevisiae.</title>
        <authorList>
            <person name="Hu Y."/>
            <person name="Rolfs A."/>
            <person name="Bhullar B."/>
            <person name="Murthy T.V.S."/>
            <person name="Zhu C."/>
            <person name="Berger M.F."/>
            <person name="Camargo A.A."/>
            <person name="Kelley F."/>
            <person name="McCarron S."/>
            <person name="Jepson D."/>
            <person name="Richardson A."/>
            <person name="Raphael J."/>
            <person name="Moreira D."/>
            <person name="Taycher E."/>
            <person name="Zuo D."/>
            <person name="Mohr S."/>
            <person name="Kane M.F."/>
            <person name="Williamson J."/>
            <person name="Simpson A.J.G."/>
            <person name="Bulyk M.L."/>
            <person name="Harlow E."/>
            <person name="Marsischky G."/>
            <person name="Kolodner R.D."/>
            <person name="LaBaer J."/>
        </authorList>
    </citation>
    <scope>NUCLEOTIDE SEQUENCE [GENOMIC DNA]</scope>
    <source>
        <strain>ATCC 204508 / S288c</strain>
    </source>
</reference>
<reference key="5">
    <citation type="journal article" date="1995" name="Biochem. Biophys. Res. Commun.">
        <title>Characterization of SFP2, a putative sulfate permease gene of Saccharomyces cerevisiae.</title>
        <authorList>
            <person name="Jin Y.H."/>
            <person name="Jang Y.K."/>
            <person name="Kim M.J."/>
            <person name="Rad M.R."/>
            <person name="Kirchrath L."/>
            <person name="Seong R.H."/>
            <person name="Hong S.H."/>
            <person name="Hollenberg C.P."/>
            <person name="Park S.D."/>
        </authorList>
    </citation>
    <scope>NUCLEOTIDE SEQUENCE [GENOMIC DNA] OF 1-585</scope>
    <source>
        <strain>ATCC 44774 / DBY747</strain>
        <strain>LP1721-1B</strain>
    </source>
</reference>
<reference key="6">
    <citation type="journal article" date="1997" name="Genetics">
        <title>Molecular characterization of two high affinity sulfate transporters in Saccharomyces cerevisiae.</title>
        <authorList>
            <person name="Cherest H."/>
            <person name="Davidian J.C."/>
            <person name="Thomas D."/>
            <person name="Benes V."/>
            <person name="Ansorge W."/>
            <person name="Surdin-Kerjan Y."/>
        </authorList>
    </citation>
    <scope>CHARACTERIZATION</scope>
</reference>
<proteinExistence type="evidence at protein level"/>
<dbReference type="EMBL" id="Z36163">
    <property type="protein sequence ID" value="CAA85259.1"/>
    <property type="molecule type" value="Genomic_DNA"/>
</dbReference>
<dbReference type="EMBL" id="X82013">
    <property type="protein sequence ID" value="CAA57540.1"/>
    <property type="molecule type" value="mRNA"/>
</dbReference>
<dbReference type="EMBL" id="AY693178">
    <property type="protein sequence ID" value="AAT93197.1"/>
    <property type="molecule type" value="Genomic_DNA"/>
</dbReference>
<dbReference type="EMBL" id="Z35134">
    <property type="protein sequence ID" value="CAA84506.1"/>
    <property type="status" value="ALT_FRAME"/>
    <property type="molecule type" value="Genomic_DNA"/>
</dbReference>
<dbReference type="EMBL" id="BK006936">
    <property type="protein sequence ID" value="DAA07408.1"/>
    <property type="molecule type" value="Genomic_DNA"/>
</dbReference>
<dbReference type="PIR" id="S46176">
    <property type="entry name" value="S46176"/>
</dbReference>
<dbReference type="RefSeq" id="NP_009853.3">
    <property type="nucleotide sequence ID" value="NM_001178642.3"/>
</dbReference>
<dbReference type="SMR" id="P38359"/>
<dbReference type="BioGRID" id="32987">
    <property type="interactions" value="57"/>
</dbReference>
<dbReference type="FunCoup" id="P38359">
    <property type="interactions" value="592"/>
</dbReference>
<dbReference type="STRING" id="4932.YBR294W"/>
<dbReference type="TCDB" id="2.A.53.1.1">
    <property type="family name" value="the sulfate permease (sulp) family"/>
</dbReference>
<dbReference type="GlyCosmos" id="P38359">
    <property type="glycosylation" value="7 sites, No reported glycans"/>
</dbReference>
<dbReference type="GlyGen" id="P38359">
    <property type="glycosylation" value="7 sites"/>
</dbReference>
<dbReference type="PaxDb" id="4932-YBR294W"/>
<dbReference type="PeptideAtlas" id="P38359"/>
<dbReference type="EnsemblFungi" id="YBR294W_mRNA">
    <property type="protein sequence ID" value="YBR294W"/>
    <property type="gene ID" value="YBR294W"/>
</dbReference>
<dbReference type="GeneID" id="852597"/>
<dbReference type="KEGG" id="sce:YBR294W"/>
<dbReference type="AGR" id="SGD:S000000498"/>
<dbReference type="SGD" id="S000000498">
    <property type="gene designation" value="SUL1"/>
</dbReference>
<dbReference type="VEuPathDB" id="FungiDB:YBR294W"/>
<dbReference type="eggNOG" id="KOG0236">
    <property type="taxonomic scope" value="Eukaryota"/>
</dbReference>
<dbReference type="GeneTree" id="ENSGT01120000271864"/>
<dbReference type="HOGENOM" id="CLU_003182_8_1_1"/>
<dbReference type="InParanoid" id="P38359"/>
<dbReference type="OMA" id="EPSAKEW"/>
<dbReference type="OrthoDB" id="288203at2759"/>
<dbReference type="BioCyc" id="YEAST:G3O-29212-MONOMER"/>
<dbReference type="Reactome" id="R-SCE-174362">
    <property type="pathway name" value="Transport and synthesis of PAPS"/>
</dbReference>
<dbReference type="Reactome" id="R-SCE-427601">
    <property type="pathway name" value="Multifunctional anion exchangers"/>
</dbReference>
<dbReference type="BioGRID-ORCS" id="852597">
    <property type="hits" value="1 hit in 10 CRISPR screens"/>
</dbReference>
<dbReference type="PRO" id="PR:P38359"/>
<dbReference type="Proteomes" id="UP000002311">
    <property type="component" value="Chromosome II"/>
</dbReference>
<dbReference type="RNAct" id="P38359">
    <property type="molecule type" value="protein"/>
</dbReference>
<dbReference type="GO" id="GO:0005886">
    <property type="term" value="C:plasma membrane"/>
    <property type="evidence" value="ECO:0000315"/>
    <property type="project" value="SGD"/>
</dbReference>
<dbReference type="GO" id="GO:0008271">
    <property type="term" value="F:secondary active sulfate transmembrane transporter activity"/>
    <property type="evidence" value="ECO:0007669"/>
    <property type="project" value="InterPro"/>
</dbReference>
<dbReference type="GO" id="GO:0015116">
    <property type="term" value="F:sulfate transmembrane transporter activity"/>
    <property type="evidence" value="ECO:0000315"/>
    <property type="project" value="SGD"/>
</dbReference>
<dbReference type="GO" id="GO:1902476">
    <property type="term" value="P:chloride transmembrane transport"/>
    <property type="evidence" value="ECO:0000318"/>
    <property type="project" value="GO_Central"/>
</dbReference>
<dbReference type="GO" id="GO:1902358">
    <property type="term" value="P:sulfate transmembrane transport"/>
    <property type="evidence" value="ECO:0000315"/>
    <property type="project" value="SGD"/>
</dbReference>
<dbReference type="GO" id="GO:0055085">
    <property type="term" value="P:transmembrane transport"/>
    <property type="evidence" value="ECO:0000315"/>
    <property type="project" value="SGD"/>
</dbReference>
<dbReference type="CDD" id="cd07042">
    <property type="entry name" value="STAS_SulP_like_sulfate_transporter"/>
    <property type="match status" value="1"/>
</dbReference>
<dbReference type="Gene3D" id="3.30.750.24">
    <property type="entry name" value="STAS domain"/>
    <property type="match status" value="1"/>
</dbReference>
<dbReference type="InterPro" id="IPR018045">
    <property type="entry name" value="S04_transporter_CS"/>
</dbReference>
<dbReference type="InterPro" id="IPR011547">
    <property type="entry name" value="SLC26A/SulP_dom"/>
</dbReference>
<dbReference type="InterPro" id="IPR001902">
    <property type="entry name" value="SLC26A/SulP_fam"/>
</dbReference>
<dbReference type="InterPro" id="IPR002645">
    <property type="entry name" value="STAS_dom"/>
</dbReference>
<dbReference type="InterPro" id="IPR036513">
    <property type="entry name" value="STAS_dom_sf"/>
</dbReference>
<dbReference type="NCBIfam" id="TIGR00815">
    <property type="entry name" value="sulP"/>
    <property type="match status" value="1"/>
</dbReference>
<dbReference type="PANTHER" id="PTHR11814">
    <property type="entry name" value="SULFATE TRANSPORTER"/>
    <property type="match status" value="1"/>
</dbReference>
<dbReference type="Pfam" id="PF00916">
    <property type="entry name" value="Sulfate_transp"/>
    <property type="match status" value="1"/>
</dbReference>
<dbReference type="SUPFAM" id="SSF52091">
    <property type="entry name" value="SpoIIaa-like"/>
    <property type="match status" value="1"/>
</dbReference>
<dbReference type="PROSITE" id="PS01130">
    <property type="entry name" value="SLC26A"/>
    <property type="match status" value="1"/>
</dbReference>
<dbReference type="PROSITE" id="PS50801">
    <property type="entry name" value="STAS"/>
    <property type="match status" value="1"/>
</dbReference>
<feature type="chain" id="PRO_0000080184" description="Sulfate permease 1">
    <location>
        <begin position="1"/>
        <end position="859"/>
    </location>
</feature>
<feature type="transmembrane region" description="Helical" evidence="1">
    <location>
        <begin position="94"/>
        <end position="114"/>
    </location>
</feature>
<feature type="transmembrane region" description="Helical" evidence="1">
    <location>
        <begin position="116"/>
        <end position="136"/>
    </location>
</feature>
<feature type="transmembrane region" description="Helical" evidence="1">
    <location>
        <begin position="148"/>
        <end position="168"/>
    </location>
</feature>
<feature type="transmembrane region" description="Helical" evidence="1">
    <location>
        <begin position="173"/>
        <end position="193"/>
    </location>
</feature>
<feature type="transmembrane region" description="Helical" evidence="1">
    <location>
        <begin position="206"/>
        <end position="226"/>
    </location>
</feature>
<feature type="transmembrane region" description="Helical" evidence="1">
    <location>
        <begin position="234"/>
        <end position="254"/>
    </location>
</feature>
<feature type="transmembrane region" description="Helical" evidence="1">
    <location>
        <begin position="292"/>
        <end position="312"/>
    </location>
</feature>
<feature type="transmembrane region" description="Helical" evidence="1">
    <location>
        <begin position="332"/>
        <end position="352"/>
    </location>
</feature>
<feature type="transmembrane region" description="Helical" evidence="1">
    <location>
        <begin position="395"/>
        <end position="415"/>
    </location>
</feature>
<feature type="transmembrane region" description="Helical" evidence="1">
    <location>
        <begin position="428"/>
        <end position="448"/>
    </location>
</feature>
<feature type="transmembrane region" description="Helical" evidence="1">
    <location>
        <begin position="468"/>
        <end position="488"/>
    </location>
</feature>
<feature type="transmembrane region" description="Helical" evidence="1">
    <location>
        <begin position="525"/>
        <end position="545"/>
    </location>
</feature>
<feature type="domain" description="STAS" evidence="2">
    <location>
        <begin position="630"/>
        <end position="808"/>
    </location>
</feature>
<feature type="glycosylation site" description="N-linked (GlcNAc...) asparagine" evidence="1">
    <location>
        <position position="51"/>
    </location>
</feature>
<feature type="glycosylation site" description="N-linked (GlcNAc...) asparagine" evidence="1">
    <location>
        <position position="93"/>
    </location>
</feature>
<feature type="glycosylation site" description="N-linked (GlcNAc...) asparagine" evidence="1">
    <location>
        <position position="358"/>
    </location>
</feature>
<feature type="glycosylation site" description="N-linked (GlcNAc...) asparagine" evidence="1">
    <location>
        <position position="391"/>
    </location>
</feature>
<feature type="glycosylation site" description="N-linked (GlcNAc...) asparagine" evidence="1">
    <location>
        <position position="630"/>
    </location>
</feature>
<feature type="glycosylation site" description="N-linked (GlcNAc...) asparagine" evidence="1">
    <location>
        <position position="653"/>
    </location>
</feature>
<feature type="glycosylation site" description="N-linked (GlcNAc...) asparagine" evidence="1">
    <location>
        <position position="718"/>
    </location>
</feature>
<feature type="sequence conflict" description="In Ref. 5; CAA84506." evidence="3" ref="5">
    <original>D</original>
    <variation>H</variation>
    <location>
        <position position="87"/>
    </location>
</feature>
<feature type="sequence conflict" description="In Ref. 5; CAA84506." evidence="3" ref="5">
    <original>A</original>
    <variation>T</variation>
    <location>
        <position position="457"/>
    </location>
</feature>
<evidence type="ECO:0000255" key="1"/>
<evidence type="ECO:0000255" key="2">
    <source>
        <dbReference type="PROSITE-ProRule" id="PRU00198"/>
    </source>
</evidence>
<evidence type="ECO:0000305" key="3"/>
<name>SUL1_YEAST</name>
<sequence>MSRKSSTEYVHNQEDADIEVFESEYRTYRESEAAENRDGLHNGDEENWKVNSSKQKFGVTKNELSDVLYDSIPAYEESTVTLKEYYDHSIKNNLTAKSAGSYLVSLFPIIKWFPHYNFTWGYADLVAGITVGCVLVPQSMSYAQIASLSPEYGLYSSFIGAFIYSLFATSKDVCIGPVAVMSLQTAKVIAEVLKKYPEDQTEVTAPIIATTLCLLCGIVATGLGILRLGFLVELISLNAVAGFMTGSAFNIIWGQIPALMGYNSLVNTREATYKVVINTLKHLPNTKLDAVFGLIPLVILYVWKWWCGTFGITLADRYYRNQPKVANRLKSFYFYAQAMRNAVVIVVFTAISWSITRNKSSKDRPISILGTVPSGLNEVGVMKIPDGLLSNMSSEIPASIIVLVLEHIAISKSFGRINDYKVVPDQELIAIGVTNLIGTFFHSYPATGSFSRSALKAKCNVRTPFSGVFTGGCVLLALYCLTDAFFFIPKATLSAVIIHAVSDLLTSYKTTWTFWKTNPLDCISFIVTVFITVFSSIENGIYFAMCWSCAMLLLKQAFPAGKFLGRVEVAEVLNPTVQEDIDAVISSNELPNELNKQVKSTVEVLPAPEYKFSVKWVPFDHGYSRELNINTTVRPPPPGVIVYRLGDSFTYVNCSRHYDIIFDRIKEETRRGQLITLRKKSDRPWNDPGEWKMPDSLKSLFKFKRHSATTNSDLPISNGSSNGETYEKPLLKVVCLDFSQVAQVDSTAVQSLVDLRKAVNRYADRQVEFHFAGIISPWIKRSLLSVKFGTTNEEYSDDSIIAGHSSFHVAKVLKDDVDYTDEDSRISTSYSNYETLCAATGTNLPFFHIDIPDFSKWDV</sequence>
<protein>
    <recommendedName>
        <fullName>Sulfate permease 1</fullName>
    </recommendedName>
    <alternativeName>
        <fullName>High-affinity sulfate transporter 1</fullName>
    </alternativeName>
</protein>